<name>SSY2_ARATH</name>
<feature type="transit peptide" description="Chloroplast" evidence="2">
    <location>
        <begin position="1"/>
        <end position="55"/>
    </location>
</feature>
<feature type="chain" id="PRO_0000419769" description="Starch synthase 2, chloroplastic/amyloplastic">
    <location>
        <begin position="56"/>
        <end position="792"/>
    </location>
</feature>
<feature type="region of interest" description="Disordered" evidence="3">
    <location>
        <begin position="105"/>
        <end position="295"/>
    </location>
</feature>
<feature type="compositionally biased region" description="Polar residues" evidence="3">
    <location>
        <begin position="145"/>
        <end position="156"/>
    </location>
</feature>
<feature type="compositionally biased region" description="Low complexity" evidence="3">
    <location>
        <begin position="179"/>
        <end position="192"/>
    </location>
</feature>
<feature type="compositionally biased region" description="Polar residues" evidence="3">
    <location>
        <begin position="221"/>
        <end position="233"/>
    </location>
</feature>
<feature type="compositionally biased region" description="Basic and acidic residues" evidence="3">
    <location>
        <begin position="266"/>
        <end position="275"/>
    </location>
</feature>
<feature type="binding site" evidence="1">
    <location>
        <position position="315"/>
    </location>
    <ligand>
        <name>ADP-alpha-D-glucose</name>
        <dbReference type="ChEBI" id="CHEBI:57498"/>
    </ligand>
</feature>
<dbReference type="EC" id="2.4.1.21"/>
<dbReference type="EMBL" id="AC008261">
    <property type="protein sequence ID" value="AAF26156.1"/>
    <property type="molecule type" value="Genomic_DNA"/>
</dbReference>
<dbReference type="EMBL" id="CP002686">
    <property type="protein sequence ID" value="AEE73621.1"/>
    <property type="molecule type" value="Genomic_DNA"/>
</dbReference>
<dbReference type="EMBL" id="AY054467">
    <property type="protein sequence ID" value="AAK96659.1"/>
    <property type="molecule type" value="mRNA"/>
</dbReference>
<dbReference type="EMBL" id="BT002555">
    <property type="protein sequence ID" value="AAO00915.1"/>
    <property type="molecule type" value="mRNA"/>
</dbReference>
<dbReference type="RefSeq" id="NP_186767.1">
    <property type="nucleotide sequence ID" value="NM_110984.3"/>
</dbReference>
<dbReference type="SMR" id="Q9MAC8"/>
<dbReference type="BioGRID" id="5628">
    <property type="interactions" value="11"/>
</dbReference>
<dbReference type="FunCoup" id="Q9MAC8">
    <property type="interactions" value="254"/>
</dbReference>
<dbReference type="IntAct" id="Q9MAC8">
    <property type="interactions" value="10"/>
</dbReference>
<dbReference type="STRING" id="3702.Q9MAC8"/>
<dbReference type="CAZy" id="GT5">
    <property type="family name" value="Glycosyltransferase Family 5"/>
</dbReference>
<dbReference type="iPTMnet" id="Q9MAC8"/>
<dbReference type="PaxDb" id="3702-AT3G01180.1"/>
<dbReference type="ProteomicsDB" id="228258"/>
<dbReference type="EnsemblPlants" id="AT3G01180.1">
    <property type="protein sequence ID" value="AT3G01180.1"/>
    <property type="gene ID" value="AT3G01180"/>
</dbReference>
<dbReference type="GeneID" id="820294"/>
<dbReference type="Gramene" id="AT3G01180.1">
    <property type="protein sequence ID" value="AT3G01180.1"/>
    <property type="gene ID" value="AT3G01180"/>
</dbReference>
<dbReference type="KEGG" id="ath:AT3G01180"/>
<dbReference type="Araport" id="AT3G01180"/>
<dbReference type="TAIR" id="AT3G01180">
    <property type="gene designation" value="SS2"/>
</dbReference>
<dbReference type="eggNOG" id="ENOG502QT35">
    <property type="taxonomic scope" value="Eukaryota"/>
</dbReference>
<dbReference type="HOGENOM" id="CLU_009583_31_1_1"/>
<dbReference type="InParanoid" id="Q9MAC8"/>
<dbReference type="OMA" id="NRYETIA"/>
<dbReference type="OrthoDB" id="512920at2759"/>
<dbReference type="PhylomeDB" id="Q9MAC8"/>
<dbReference type="UniPathway" id="UPA00152"/>
<dbReference type="PRO" id="PR:Q9MAC8"/>
<dbReference type="Proteomes" id="UP000006548">
    <property type="component" value="Chromosome 3"/>
</dbReference>
<dbReference type="ExpressionAtlas" id="Q9MAC8">
    <property type="expression patterns" value="baseline and differential"/>
</dbReference>
<dbReference type="GO" id="GO:0009501">
    <property type="term" value="C:amyloplast"/>
    <property type="evidence" value="ECO:0007669"/>
    <property type="project" value="UniProtKB-SubCell"/>
</dbReference>
<dbReference type="GO" id="GO:0009507">
    <property type="term" value="C:chloroplast"/>
    <property type="evidence" value="ECO:0007005"/>
    <property type="project" value="TAIR"/>
</dbReference>
<dbReference type="GO" id="GO:0009011">
    <property type="term" value="F:alpha-1,4-glucan glucosyltransferase (ADP-glucose donor) activity"/>
    <property type="evidence" value="ECO:0000315"/>
    <property type="project" value="UniProtKB"/>
</dbReference>
<dbReference type="GO" id="GO:0004373">
    <property type="term" value="F:alpha-1,4-glucan glucosyltransferase (UDP-glucose donor) activity"/>
    <property type="evidence" value="ECO:0007669"/>
    <property type="project" value="InterPro"/>
</dbReference>
<dbReference type="GO" id="GO:0010021">
    <property type="term" value="P:amylopectin biosynthetic process"/>
    <property type="evidence" value="ECO:0000315"/>
    <property type="project" value="UniProtKB"/>
</dbReference>
<dbReference type="GO" id="GO:0019252">
    <property type="term" value="P:starch biosynthetic process"/>
    <property type="evidence" value="ECO:0007669"/>
    <property type="project" value="UniProtKB-UniPathway"/>
</dbReference>
<dbReference type="CDD" id="cd03791">
    <property type="entry name" value="GT5_Glycogen_synthase_DULL1-like"/>
    <property type="match status" value="1"/>
</dbReference>
<dbReference type="FunFam" id="3.40.50.2000:FF:000048">
    <property type="entry name" value="Starch synthase, chloroplastic/amyloplastic"/>
    <property type="match status" value="1"/>
</dbReference>
<dbReference type="Gene3D" id="3.40.50.2000">
    <property type="entry name" value="Glycogen Phosphorylase B"/>
    <property type="match status" value="2"/>
</dbReference>
<dbReference type="HAMAP" id="MF_00484">
    <property type="entry name" value="Glycogen_synth"/>
    <property type="match status" value="1"/>
</dbReference>
<dbReference type="InterPro" id="IPR011835">
    <property type="entry name" value="GS/SS"/>
</dbReference>
<dbReference type="InterPro" id="IPR013534">
    <property type="entry name" value="Starch_synth_cat_dom"/>
</dbReference>
<dbReference type="NCBIfam" id="TIGR02095">
    <property type="entry name" value="glgA"/>
    <property type="match status" value="1"/>
</dbReference>
<dbReference type="PANTHER" id="PTHR45825">
    <property type="entry name" value="GRANULE-BOUND STARCH SYNTHASE 1, CHLOROPLASTIC/AMYLOPLASTIC"/>
    <property type="match status" value="1"/>
</dbReference>
<dbReference type="PANTHER" id="PTHR45825:SF2">
    <property type="entry name" value="STARCH SYNTHASE 2, CHLOROPLASTIC_AMYLOPLASTIC"/>
    <property type="match status" value="1"/>
</dbReference>
<dbReference type="Pfam" id="PF13692">
    <property type="entry name" value="Glyco_trans_1_4"/>
    <property type="match status" value="1"/>
</dbReference>
<dbReference type="Pfam" id="PF08323">
    <property type="entry name" value="Glyco_transf_5"/>
    <property type="match status" value="1"/>
</dbReference>
<dbReference type="SUPFAM" id="SSF53756">
    <property type="entry name" value="UDP-Glycosyltransferase/glycogen phosphorylase"/>
    <property type="match status" value="1"/>
</dbReference>
<gene>
    <name type="primary">SS2</name>
    <name type="ordered locus">At3g01180</name>
    <name type="ORF">T4P13.13</name>
</gene>
<protein>
    <recommendedName>
        <fullName>Starch synthase 2, chloroplastic/amyloplastic</fullName>
        <shortName>AtSS2</shortName>
        <ecNumber>2.4.1.21</ecNumber>
    </recommendedName>
    <alternativeName>
        <fullName>Soluble starch synthase II</fullName>
    </alternativeName>
</protein>
<sequence length="792" mass="87593">MASVAESSFPLLCQIKTQRRINSSTLRHSRVSYHDLPSGSLSFRSRSFVLGHRCKCVSRVEASGSDDDEPEDALQATIDKSKKVLAMQRNLLHQIAERRKLVSSIKESTPDLDDAKASSKQESASSVNANTDATKKEIMDGDANGSVSPSTYGKSSLSKEPEAKTFSPSTESLKNRKQSSASVISSSPVTSPQKPSDVATNGKPWSSVVASSVDPPYKPSSVMTSPEKTSDPVTSPGKPSKSRAGAFWSDPLPSYLTKAPQTSTMKTEKYVEKTPDVASSETNEPGKDEEKPPPLAGANVMNVILVAAECAPFSKTGGLGDVAGALPKSLARRGHRVMVVVPRYAEYAEAKDLGVRKRYKVAGQDMEVMYFHAFIDGVDFVFIDSPEFRHLSNNIYGGNRLDILKRMVLFCKAAVEVPWYVPCGGVCYGDGNLAFIANDWHTALLPVYLKAYYRDHGIMKYTRSVLVIHNIAHQGRGPVDDFSYVDLPSHYLDSFKLYDPVGGEHFNIFAAGLKAADRVLTVSHGYSWEVKTLEGGWGLHNIINENDWKFRGIVNGIDTQEWNPEFDTYLHSDDYTNYSLENLHIGKPQCKAALQKELGLPVRPDVPLIGFIGRLDHQKGVDLIAEAVPWMMSQDVQLVMLGTGRPDLEEVLRQMEHQYRDKARGWVGFSVKTAHRITAGADILLMPSRFEPCGLNQLYAMNYGTIPVVHAVGGLRDTVQQFDPYSETGLGWTFDSAEAGKLIHALGNCLLTYREYKESWEGLQRRGMTQDLSWDNAAEKYEEVLVAAKYHW</sequence>
<comment type="function">
    <text evidence="5">Involved in the synthesis of glycan chains within amylopectin in leaves. Is required to produce chains with a degree of polymerization of 12 to 25 (DP12-DP25).</text>
</comment>
<comment type="catalytic activity">
    <reaction>
        <text>[(1-&gt;4)-alpha-D-glucosyl](n) + ADP-alpha-D-glucose = [(1-&gt;4)-alpha-D-glucosyl](n+1) + ADP + H(+)</text>
        <dbReference type="Rhea" id="RHEA:18189"/>
        <dbReference type="Rhea" id="RHEA-COMP:9584"/>
        <dbReference type="Rhea" id="RHEA-COMP:9587"/>
        <dbReference type="ChEBI" id="CHEBI:15378"/>
        <dbReference type="ChEBI" id="CHEBI:15444"/>
        <dbReference type="ChEBI" id="CHEBI:57498"/>
        <dbReference type="ChEBI" id="CHEBI:456216"/>
        <dbReference type="EC" id="2.4.1.21"/>
    </reaction>
</comment>
<comment type="pathway">
    <text>Glycan biosynthesis; starch biosynthesis.</text>
</comment>
<comment type="subcellular location">
    <subcellularLocation>
        <location>Plastid</location>
        <location>Chloroplast</location>
    </subcellularLocation>
    <subcellularLocation>
        <location evidence="6">Plastid</location>
        <location evidence="6">Amyloplast</location>
    </subcellularLocation>
</comment>
<comment type="tissue specificity">
    <text evidence="4">Expressed in roots, leaves and flowers.</text>
</comment>
<comment type="disruption phenotype">
    <text evidence="5">Reduced plant growth under short day photopheriod conditions and starch granules with alterated morphology.</text>
</comment>
<comment type="similarity">
    <text evidence="6">Belongs to the glycosyltransferase 1 family. Bacterial/plant glycogen synthase subfamily.</text>
</comment>
<evidence type="ECO:0000250" key="1"/>
<evidence type="ECO:0000255" key="2"/>
<evidence type="ECO:0000256" key="3">
    <source>
        <dbReference type="SAM" id="MobiDB-lite"/>
    </source>
</evidence>
<evidence type="ECO:0000269" key="4">
    <source>
    </source>
</evidence>
<evidence type="ECO:0000269" key="5">
    <source>
    </source>
</evidence>
<evidence type="ECO:0000305" key="6"/>
<keyword id="KW-0035">Amyloplast</keyword>
<keyword id="KW-0150">Chloroplast</keyword>
<keyword id="KW-0328">Glycosyltransferase</keyword>
<keyword id="KW-0934">Plastid</keyword>
<keyword id="KW-1185">Reference proteome</keyword>
<keyword id="KW-0750">Starch biosynthesis</keyword>
<keyword id="KW-0808">Transferase</keyword>
<keyword id="KW-0809">Transit peptide</keyword>
<organism>
    <name type="scientific">Arabidopsis thaliana</name>
    <name type="common">Mouse-ear cress</name>
    <dbReference type="NCBI Taxonomy" id="3702"/>
    <lineage>
        <taxon>Eukaryota</taxon>
        <taxon>Viridiplantae</taxon>
        <taxon>Streptophyta</taxon>
        <taxon>Embryophyta</taxon>
        <taxon>Tracheophyta</taxon>
        <taxon>Spermatophyta</taxon>
        <taxon>Magnoliopsida</taxon>
        <taxon>eudicotyledons</taxon>
        <taxon>Gunneridae</taxon>
        <taxon>Pentapetalae</taxon>
        <taxon>rosids</taxon>
        <taxon>malvids</taxon>
        <taxon>Brassicales</taxon>
        <taxon>Brassicaceae</taxon>
        <taxon>Camelineae</taxon>
        <taxon>Arabidopsis</taxon>
    </lineage>
</organism>
<proteinExistence type="evidence at protein level"/>
<reference key="1">
    <citation type="journal article" date="2000" name="Nature">
        <title>Sequence and analysis of chromosome 3 of the plant Arabidopsis thaliana.</title>
        <authorList>
            <person name="Salanoubat M."/>
            <person name="Lemcke K."/>
            <person name="Rieger M."/>
            <person name="Ansorge W."/>
            <person name="Unseld M."/>
            <person name="Fartmann B."/>
            <person name="Valle G."/>
            <person name="Bloecker H."/>
            <person name="Perez-Alonso M."/>
            <person name="Obermaier B."/>
            <person name="Delseny M."/>
            <person name="Boutry M."/>
            <person name="Grivell L.A."/>
            <person name="Mache R."/>
            <person name="Puigdomenech P."/>
            <person name="De Simone V."/>
            <person name="Choisne N."/>
            <person name="Artiguenave F."/>
            <person name="Robert C."/>
            <person name="Brottier P."/>
            <person name="Wincker P."/>
            <person name="Cattolico L."/>
            <person name="Weissenbach J."/>
            <person name="Saurin W."/>
            <person name="Quetier F."/>
            <person name="Schaefer M."/>
            <person name="Mueller-Auer S."/>
            <person name="Gabel C."/>
            <person name="Fuchs M."/>
            <person name="Benes V."/>
            <person name="Wurmbach E."/>
            <person name="Drzonek H."/>
            <person name="Erfle H."/>
            <person name="Jordan N."/>
            <person name="Bangert S."/>
            <person name="Wiedelmann R."/>
            <person name="Kranz H."/>
            <person name="Voss H."/>
            <person name="Holland R."/>
            <person name="Brandt P."/>
            <person name="Nyakatura G."/>
            <person name="Vezzi A."/>
            <person name="D'Angelo M."/>
            <person name="Pallavicini A."/>
            <person name="Toppo S."/>
            <person name="Simionati B."/>
            <person name="Conrad A."/>
            <person name="Hornischer K."/>
            <person name="Kauer G."/>
            <person name="Loehnert T.-H."/>
            <person name="Nordsiek G."/>
            <person name="Reichelt J."/>
            <person name="Scharfe M."/>
            <person name="Schoen O."/>
            <person name="Bargues M."/>
            <person name="Terol J."/>
            <person name="Climent J."/>
            <person name="Navarro P."/>
            <person name="Collado C."/>
            <person name="Perez-Perez A."/>
            <person name="Ottenwaelder B."/>
            <person name="Duchemin D."/>
            <person name="Cooke R."/>
            <person name="Laudie M."/>
            <person name="Berger-Llauro C."/>
            <person name="Purnelle B."/>
            <person name="Masuy D."/>
            <person name="de Haan M."/>
            <person name="Maarse A.C."/>
            <person name="Alcaraz J.-P."/>
            <person name="Cottet A."/>
            <person name="Casacuberta E."/>
            <person name="Monfort A."/>
            <person name="Argiriou A."/>
            <person name="Flores M."/>
            <person name="Liguori R."/>
            <person name="Vitale D."/>
            <person name="Mannhaupt G."/>
            <person name="Haase D."/>
            <person name="Schoof H."/>
            <person name="Rudd S."/>
            <person name="Zaccaria P."/>
            <person name="Mewes H.-W."/>
            <person name="Mayer K.F.X."/>
            <person name="Kaul S."/>
            <person name="Town C.D."/>
            <person name="Koo H.L."/>
            <person name="Tallon L.J."/>
            <person name="Jenkins J."/>
            <person name="Rooney T."/>
            <person name="Rizzo M."/>
            <person name="Walts A."/>
            <person name="Utterback T."/>
            <person name="Fujii C.Y."/>
            <person name="Shea T.P."/>
            <person name="Creasy T.H."/>
            <person name="Haas B."/>
            <person name="Maiti R."/>
            <person name="Wu D."/>
            <person name="Peterson J."/>
            <person name="Van Aken S."/>
            <person name="Pai G."/>
            <person name="Militscher J."/>
            <person name="Sellers P."/>
            <person name="Gill J.E."/>
            <person name="Feldblyum T.V."/>
            <person name="Preuss D."/>
            <person name="Lin X."/>
            <person name="Nierman W.C."/>
            <person name="Salzberg S.L."/>
            <person name="White O."/>
            <person name="Venter J.C."/>
            <person name="Fraser C.M."/>
            <person name="Kaneko T."/>
            <person name="Nakamura Y."/>
            <person name="Sato S."/>
            <person name="Kato T."/>
            <person name="Asamizu E."/>
            <person name="Sasamoto S."/>
            <person name="Kimura T."/>
            <person name="Idesawa K."/>
            <person name="Kawashima K."/>
            <person name="Kishida Y."/>
            <person name="Kiyokawa C."/>
            <person name="Kohara M."/>
            <person name="Matsumoto M."/>
            <person name="Matsuno A."/>
            <person name="Muraki A."/>
            <person name="Nakayama S."/>
            <person name="Nakazaki N."/>
            <person name="Shinpo S."/>
            <person name="Takeuchi C."/>
            <person name="Wada T."/>
            <person name="Watanabe A."/>
            <person name="Yamada M."/>
            <person name="Yasuda M."/>
            <person name="Tabata S."/>
        </authorList>
    </citation>
    <scope>NUCLEOTIDE SEQUENCE [LARGE SCALE GENOMIC DNA]</scope>
    <source>
        <strain>cv. Columbia</strain>
    </source>
</reference>
<reference key="2">
    <citation type="journal article" date="2017" name="Plant J.">
        <title>Araport11: a complete reannotation of the Arabidopsis thaliana reference genome.</title>
        <authorList>
            <person name="Cheng C.Y."/>
            <person name="Krishnakumar V."/>
            <person name="Chan A.P."/>
            <person name="Thibaud-Nissen F."/>
            <person name="Schobel S."/>
            <person name="Town C.D."/>
        </authorList>
    </citation>
    <scope>GENOME REANNOTATION</scope>
    <source>
        <strain>cv. Columbia</strain>
    </source>
</reference>
<reference key="3">
    <citation type="journal article" date="2003" name="Science">
        <title>Empirical analysis of transcriptional activity in the Arabidopsis genome.</title>
        <authorList>
            <person name="Yamada K."/>
            <person name="Lim J."/>
            <person name="Dale J.M."/>
            <person name="Chen H."/>
            <person name="Shinn P."/>
            <person name="Palm C.J."/>
            <person name="Southwick A.M."/>
            <person name="Wu H.C."/>
            <person name="Kim C.J."/>
            <person name="Nguyen M."/>
            <person name="Pham P.K."/>
            <person name="Cheuk R.F."/>
            <person name="Karlin-Newmann G."/>
            <person name="Liu S.X."/>
            <person name="Lam B."/>
            <person name="Sakano H."/>
            <person name="Wu T."/>
            <person name="Yu G."/>
            <person name="Miranda M."/>
            <person name="Quach H.L."/>
            <person name="Tripp M."/>
            <person name="Chang C.H."/>
            <person name="Lee J.M."/>
            <person name="Toriumi M.J."/>
            <person name="Chan M.M."/>
            <person name="Tang C.C."/>
            <person name="Onodera C.S."/>
            <person name="Deng J.M."/>
            <person name="Akiyama K."/>
            <person name="Ansari Y."/>
            <person name="Arakawa T."/>
            <person name="Banh J."/>
            <person name="Banno F."/>
            <person name="Bowser L."/>
            <person name="Brooks S.Y."/>
            <person name="Carninci P."/>
            <person name="Chao Q."/>
            <person name="Choy N."/>
            <person name="Enju A."/>
            <person name="Goldsmith A.D."/>
            <person name="Gurjal M."/>
            <person name="Hansen N.F."/>
            <person name="Hayashizaki Y."/>
            <person name="Johnson-Hopson C."/>
            <person name="Hsuan V.W."/>
            <person name="Iida K."/>
            <person name="Karnes M."/>
            <person name="Khan S."/>
            <person name="Koesema E."/>
            <person name="Ishida J."/>
            <person name="Jiang P.X."/>
            <person name="Jones T."/>
            <person name="Kawai J."/>
            <person name="Kamiya A."/>
            <person name="Meyers C."/>
            <person name="Nakajima M."/>
            <person name="Narusaka M."/>
            <person name="Seki M."/>
            <person name="Sakurai T."/>
            <person name="Satou M."/>
            <person name="Tamse R."/>
            <person name="Vaysberg M."/>
            <person name="Wallender E.K."/>
            <person name="Wong C."/>
            <person name="Yamamura Y."/>
            <person name="Yuan S."/>
            <person name="Shinozaki K."/>
            <person name="Davis R.W."/>
            <person name="Theologis A."/>
            <person name="Ecker J.R."/>
        </authorList>
    </citation>
    <scope>NUCLEOTIDE SEQUENCE [LARGE SCALE MRNA]</scope>
    <source>
        <strain>cv. Columbia</strain>
    </source>
</reference>
<reference key="4">
    <citation type="journal article" date="2007" name="Plant J.">
        <title>The phenotype of soluble starch synthase IV defective mutants of Arabidopsis thaliana suggests a novel function of elongation enzymes in the control of starch granule formation.</title>
        <authorList>
            <person name="Roldan I."/>
            <person name="Wattebled F."/>
            <person name="Mercedes Lucas M."/>
            <person name="Delvalle D."/>
            <person name="Planchot V."/>
            <person name="Jimenez S."/>
            <person name="Perez R."/>
            <person name="Ball S."/>
            <person name="D'Hulst C."/>
            <person name="Merida A."/>
        </authorList>
    </citation>
    <scope>TISSUE SPECIFICITY</scope>
</reference>
<reference key="5">
    <citation type="journal article" date="2008" name="BMC Plant Biol.">
        <title>Overlapping functions of the starch synthases SSII and SSIII in amylopectin biosynthesis in Arabidopsis.</title>
        <authorList>
            <person name="Zhang X."/>
            <person name="Szydlowski N."/>
            <person name="Delvalle D."/>
            <person name="D'Hulst C."/>
            <person name="James M.G."/>
            <person name="Myers A.M."/>
        </authorList>
    </citation>
    <scope>FUNCTION</scope>
    <scope>DISRUPTION PHENOTYPE</scope>
    <source>
        <strain>cv. Columbia</strain>
    </source>
</reference>
<reference key="6">
    <citation type="journal article" date="2009" name="Plant Physiol.">
        <title>Large-scale Arabidopsis phosphoproteome profiling reveals novel chloroplast kinase substrates and phosphorylation networks.</title>
        <authorList>
            <person name="Reiland S."/>
            <person name="Messerli G."/>
            <person name="Baerenfaller K."/>
            <person name="Gerrits B."/>
            <person name="Endler A."/>
            <person name="Grossmann J."/>
            <person name="Gruissem W."/>
            <person name="Baginsky S."/>
        </authorList>
    </citation>
    <scope>IDENTIFICATION BY MASS SPECTROMETRY [LARGE SCALE ANALYSIS]</scope>
</reference>
<accession>Q9MAC8</accession>